<keyword id="KW-0963">Cytoplasm</keyword>
<keyword id="KW-0269">Exonuclease</keyword>
<keyword id="KW-0378">Hydrolase</keyword>
<keyword id="KW-0540">Nuclease</keyword>
<keyword id="KW-1185">Reference proteome</keyword>
<organism>
    <name type="scientific">Mycobacterium tuberculosis (strain CDC 1551 / Oshkosh)</name>
    <dbReference type="NCBI Taxonomy" id="83331"/>
    <lineage>
        <taxon>Bacteria</taxon>
        <taxon>Bacillati</taxon>
        <taxon>Actinomycetota</taxon>
        <taxon>Actinomycetes</taxon>
        <taxon>Mycobacteriales</taxon>
        <taxon>Mycobacteriaceae</taxon>
        <taxon>Mycobacterium</taxon>
        <taxon>Mycobacterium tuberculosis complex</taxon>
    </lineage>
</organism>
<sequence>MVCDPNGDDTGRTHATVPVSQLGYEACRDELMEVVRLLEQGGLDLDASLRLWERGEQLAKRCEEHLAGARQRVSDVLAGDEAQNG</sequence>
<comment type="function">
    <text evidence="1">Bidirectionally degrades single-stranded DNA into large acid-insoluble oligonucleotides, which are then degraded further into small acid-soluble oligonucleotides.</text>
</comment>
<comment type="catalytic activity">
    <reaction evidence="1">
        <text>Exonucleolytic cleavage in either 5'- to 3'- or 3'- to 5'-direction to yield nucleoside 5'-phosphates.</text>
        <dbReference type="EC" id="3.1.11.6"/>
    </reaction>
</comment>
<comment type="subunit">
    <text evidence="1">Heterooligomer composed of large and small subunits.</text>
</comment>
<comment type="subcellular location">
    <subcellularLocation>
        <location evidence="1">Cytoplasm</location>
    </subcellularLocation>
</comment>
<comment type="similarity">
    <text evidence="1 2">Belongs to the XseB family.</text>
</comment>
<comment type="sequence caution" evidence="2">
    <conflict type="erroneous initiation">
        <sequence resource="EMBL-CDS" id="AAK45395"/>
    </conflict>
    <text>Extended N-terminus.</text>
</comment>
<evidence type="ECO:0000255" key="1">
    <source>
        <dbReference type="HAMAP-Rule" id="MF_00337"/>
    </source>
</evidence>
<evidence type="ECO:0000305" key="2"/>
<proteinExistence type="inferred from homology"/>
<dbReference type="EC" id="3.1.11.6" evidence="1"/>
<dbReference type="EMBL" id="AE000516">
    <property type="protein sequence ID" value="AAK45395.1"/>
    <property type="status" value="ALT_INIT"/>
    <property type="molecule type" value="Genomic_DNA"/>
</dbReference>
<dbReference type="PIR" id="A70898">
    <property type="entry name" value="A70898"/>
</dbReference>
<dbReference type="RefSeq" id="WP_003405844.1">
    <property type="nucleotide sequence ID" value="NZ_KK341227.1"/>
</dbReference>
<dbReference type="SMR" id="P9WF28"/>
<dbReference type="KEGG" id="mtc:MT1138"/>
<dbReference type="PATRIC" id="fig|83331.31.peg.1230"/>
<dbReference type="HOGENOM" id="CLU_145918_0_2_11"/>
<dbReference type="Proteomes" id="UP000001020">
    <property type="component" value="Chromosome"/>
</dbReference>
<dbReference type="GO" id="GO:0005829">
    <property type="term" value="C:cytosol"/>
    <property type="evidence" value="ECO:0007669"/>
    <property type="project" value="TreeGrafter"/>
</dbReference>
<dbReference type="GO" id="GO:0009318">
    <property type="term" value="C:exodeoxyribonuclease VII complex"/>
    <property type="evidence" value="ECO:0007669"/>
    <property type="project" value="InterPro"/>
</dbReference>
<dbReference type="GO" id="GO:0008855">
    <property type="term" value="F:exodeoxyribonuclease VII activity"/>
    <property type="evidence" value="ECO:0007669"/>
    <property type="project" value="UniProtKB-UniRule"/>
</dbReference>
<dbReference type="GO" id="GO:0006308">
    <property type="term" value="P:DNA catabolic process"/>
    <property type="evidence" value="ECO:0007669"/>
    <property type="project" value="UniProtKB-UniRule"/>
</dbReference>
<dbReference type="FunFam" id="1.10.287.1040:FF:000004">
    <property type="entry name" value="Exodeoxyribonuclease 7 small subunit"/>
    <property type="match status" value="1"/>
</dbReference>
<dbReference type="Gene3D" id="1.10.287.1040">
    <property type="entry name" value="Exonuclease VII, small subunit"/>
    <property type="match status" value="1"/>
</dbReference>
<dbReference type="HAMAP" id="MF_00337">
    <property type="entry name" value="Exonuc_7_S"/>
    <property type="match status" value="1"/>
</dbReference>
<dbReference type="InterPro" id="IPR003761">
    <property type="entry name" value="Exonuc_VII_S"/>
</dbReference>
<dbReference type="InterPro" id="IPR037004">
    <property type="entry name" value="Exonuc_VII_ssu_sf"/>
</dbReference>
<dbReference type="NCBIfam" id="NF002139">
    <property type="entry name" value="PRK00977.1-3"/>
    <property type="match status" value="1"/>
</dbReference>
<dbReference type="NCBIfam" id="TIGR01280">
    <property type="entry name" value="xseB"/>
    <property type="match status" value="1"/>
</dbReference>
<dbReference type="PANTHER" id="PTHR34137">
    <property type="entry name" value="EXODEOXYRIBONUCLEASE 7 SMALL SUBUNIT"/>
    <property type="match status" value="1"/>
</dbReference>
<dbReference type="PANTHER" id="PTHR34137:SF1">
    <property type="entry name" value="EXODEOXYRIBONUCLEASE 7 SMALL SUBUNIT"/>
    <property type="match status" value="1"/>
</dbReference>
<dbReference type="Pfam" id="PF02609">
    <property type="entry name" value="Exonuc_VII_S"/>
    <property type="match status" value="1"/>
</dbReference>
<dbReference type="PIRSF" id="PIRSF006488">
    <property type="entry name" value="Exonuc_VII_S"/>
    <property type="match status" value="1"/>
</dbReference>
<dbReference type="SUPFAM" id="SSF116842">
    <property type="entry name" value="XseB-like"/>
    <property type="match status" value="1"/>
</dbReference>
<feature type="chain" id="PRO_0000428611" description="Exodeoxyribonuclease 7 small subunit">
    <location>
        <begin position="1"/>
        <end position="85"/>
    </location>
</feature>
<name>EX7S_MYCTO</name>
<gene>
    <name evidence="1" type="primary">xseB</name>
    <name type="ordered locus">MT1138</name>
</gene>
<reference key="1">
    <citation type="journal article" date="2002" name="J. Bacteriol.">
        <title>Whole-genome comparison of Mycobacterium tuberculosis clinical and laboratory strains.</title>
        <authorList>
            <person name="Fleischmann R.D."/>
            <person name="Alland D."/>
            <person name="Eisen J.A."/>
            <person name="Carpenter L."/>
            <person name="White O."/>
            <person name="Peterson J.D."/>
            <person name="DeBoy R.T."/>
            <person name="Dodson R.J."/>
            <person name="Gwinn M.L."/>
            <person name="Haft D.H."/>
            <person name="Hickey E.K."/>
            <person name="Kolonay J.F."/>
            <person name="Nelson W.C."/>
            <person name="Umayam L.A."/>
            <person name="Ermolaeva M.D."/>
            <person name="Salzberg S.L."/>
            <person name="Delcher A."/>
            <person name="Utterback T.R."/>
            <person name="Weidman J.F."/>
            <person name="Khouri H.M."/>
            <person name="Gill J."/>
            <person name="Mikula A."/>
            <person name="Bishai W."/>
            <person name="Jacobs W.R. Jr."/>
            <person name="Venter J.C."/>
            <person name="Fraser C.M."/>
        </authorList>
    </citation>
    <scope>NUCLEOTIDE SEQUENCE [LARGE SCALE GENOMIC DNA]</scope>
    <source>
        <strain>CDC 1551 / Oshkosh</strain>
    </source>
</reference>
<protein>
    <recommendedName>
        <fullName evidence="1">Exodeoxyribonuclease 7 small subunit</fullName>
        <ecNumber evidence="1">3.1.11.6</ecNumber>
    </recommendedName>
    <alternativeName>
        <fullName evidence="1">Exodeoxyribonuclease VII small subunit</fullName>
        <shortName evidence="1">Exonuclease VII small subunit</shortName>
    </alternativeName>
</protein>
<accession>P9WF28</accession>
<accession>L0T5S4</accession>
<accession>O53455</accession>
<accession>P67456</accession>